<protein>
    <recommendedName>
        <fullName>Probable cytosolic Fe-S cluster assembly factor GJ13047</fullName>
    </recommendedName>
</protein>
<gene>
    <name type="ORF">GJ13047</name>
</gene>
<sequence length="476" mass="53663">MSRFSGALQLTDLDDFITPSQECIKPVMIDKTKSKTGAKITVQADGYYEQSESGKQKLQKVEITLQDCLACSGCITSAEGVLITQQSQEELLKVLRENQTLKASGDNDQVRTIVFTISVQPLLSLAHRYDLGVEEASRYLAGYLRQLGADYVLCTKIADDLALLECRQEFVERFRDNAELSMLSSSCPGWVCYAEKTHGNFILPHIATTRSPQQIMGVLVKQLLAEKLGVPGSRIYHATIMPCYDKKLEASREDFYSEVNGSRDVDCVITSIEVEQMLQAEEQTLQQFEPSDIDWPWTDQQPEFPVWAHEATMSGGYAEHIFKYAAKELFSEETPNELQFKALRNRDFSEISLEKDGKTVLKFAIANGFRNIQNLVQKLKRGKGPGYHFVEVMACPSGCINGGAQVRPTTGQHVRELTQQLEELYKQLPRSNPDNSYTKQIYTDFLDGAHTDKSLELLHTSYHAVEKLNTALNIKW</sequence>
<reference key="1">
    <citation type="journal article" date="2007" name="Nature">
        <title>Evolution of genes and genomes on the Drosophila phylogeny.</title>
        <authorList>
            <consortium name="Drosophila 12 genomes consortium"/>
        </authorList>
    </citation>
    <scope>NUCLEOTIDE SEQUENCE [LARGE SCALE GENOMIC DNA]</scope>
    <source>
        <strain>Tucson 15010-1051.87</strain>
    </source>
</reference>
<proteinExistence type="inferred from homology"/>
<name>NARF_DROVI</name>
<feature type="chain" id="PRO_0000383708" description="Probable cytosolic Fe-S cluster assembly factor GJ13047">
    <location>
        <begin position="1"/>
        <end position="476"/>
    </location>
</feature>
<feature type="binding site" evidence="2">
    <location>
        <position position="23"/>
    </location>
    <ligand>
        <name>[4Fe-4S] cluster</name>
        <dbReference type="ChEBI" id="CHEBI:49883"/>
        <label>1</label>
    </ligand>
</feature>
<feature type="binding site" evidence="2">
    <location>
        <position position="68"/>
    </location>
    <ligand>
        <name>[4Fe-4S] cluster</name>
        <dbReference type="ChEBI" id="CHEBI:49883"/>
        <label>1</label>
    </ligand>
</feature>
<feature type="binding site" evidence="2">
    <location>
        <position position="71"/>
    </location>
    <ligand>
        <name>[4Fe-4S] cluster</name>
        <dbReference type="ChEBI" id="CHEBI:49883"/>
        <label>1</label>
    </ligand>
</feature>
<feature type="binding site" evidence="2">
    <location>
        <position position="74"/>
    </location>
    <ligand>
        <name>[4Fe-4S] cluster</name>
        <dbReference type="ChEBI" id="CHEBI:49883"/>
        <label>1</label>
    </ligand>
</feature>
<feature type="binding site" evidence="2">
    <location>
        <position position="187"/>
    </location>
    <ligand>
        <name>[4Fe-4S] cluster</name>
        <dbReference type="ChEBI" id="CHEBI:49883"/>
        <label>2</label>
    </ligand>
</feature>
<feature type="binding site" evidence="2">
    <location>
        <position position="243"/>
    </location>
    <ligand>
        <name>[4Fe-4S] cluster</name>
        <dbReference type="ChEBI" id="CHEBI:49883"/>
        <label>2</label>
    </ligand>
</feature>
<feature type="binding site" evidence="2">
    <location>
        <position position="395"/>
    </location>
    <ligand>
        <name>[4Fe-4S] cluster</name>
        <dbReference type="ChEBI" id="CHEBI:49883"/>
        <label>2</label>
    </ligand>
</feature>
<feature type="binding site" evidence="2">
    <location>
        <position position="399"/>
    </location>
    <ligand>
        <name>[4Fe-4S] cluster</name>
        <dbReference type="ChEBI" id="CHEBI:49883"/>
        <label>2</label>
    </ligand>
</feature>
<organism>
    <name type="scientific">Drosophila virilis</name>
    <name type="common">Fruit fly</name>
    <dbReference type="NCBI Taxonomy" id="7244"/>
    <lineage>
        <taxon>Eukaryota</taxon>
        <taxon>Metazoa</taxon>
        <taxon>Ecdysozoa</taxon>
        <taxon>Arthropoda</taxon>
        <taxon>Hexapoda</taxon>
        <taxon>Insecta</taxon>
        <taxon>Pterygota</taxon>
        <taxon>Neoptera</taxon>
        <taxon>Endopterygota</taxon>
        <taxon>Diptera</taxon>
        <taxon>Brachycera</taxon>
        <taxon>Muscomorpha</taxon>
        <taxon>Ephydroidea</taxon>
        <taxon>Drosophilidae</taxon>
        <taxon>Drosophila</taxon>
    </lineage>
</organism>
<dbReference type="EMBL" id="CH940649">
    <property type="protein sequence ID" value="EDW63449.1"/>
    <property type="molecule type" value="Genomic_DNA"/>
</dbReference>
<dbReference type="SMR" id="B4LQR5"/>
<dbReference type="FunCoup" id="B4LQR5">
    <property type="interactions" value="492"/>
</dbReference>
<dbReference type="STRING" id="7244.B4LQR5"/>
<dbReference type="EnsemblMetazoa" id="FBtr0228972">
    <property type="protein sequence ID" value="FBpp0227464"/>
    <property type="gene ID" value="FBgn0200281"/>
</dbReference>
<dbReference type="EnsemblMetazoa" id="XM_002051258.3">
    <property type="protein sequence ID" value="XP_002051294.1"/>
    <property type="gene ID" value="LOC6627489"/>
</dbReference>
<dbReference type="GeneID" id="6627489"/>
<dbReference type="KEGG" id="dvi:6627489"/>
<dbReference type="eggNOG" id="KOG2439">
    <property type="taxonomic scope" value="Eukaryota"/>
</dbReference>
<dbReference type="HOGENOM" id="CLU_018240_0_0_1"/>
<dbReference type="InParanoid" id="B4LQR5"/>
<dbReference type="OMA" id="GYLHHVL"/>
<dbReference type="OrthoDB" id="10253113at2759"/>
<dbReference type="PhylomeDB" id="B4LQR5"/>
<dbReference type="Proteomes" id="UP000008792">
    <property type="component" value="Unassembled WGS sequence"/>
</dbReference>
<dbReference type="GO" id="GO:0051539">
    <property type="term" value="F:4 iron, 4 sulfur cluster binding"/>
    <property type="evidence" value="ECO:0007669"/>
    <property type="project" value="UniProtKB-KW"/>
</dbReference>
<dbReference type="GO" id="GO:0046872">
    <property type="term" value="F:metal ion binding"/>
    <property type="evidence" value="ECO:0007669"/>
    <property type="project" value="UniProtKB-KW"/>
</dbReference>
<dbReference type="GO" id="GO:0016226">
    <property type="term" value="P:iron-sulfur cluster assembly"/>
    <property type="evidence" value="ECO:0000250"/>
    <property type="project" value="UniProtKB"/>
</dbReference>
<dbReference type="Gene3D" id="3.40.50.1780">
    <property type="match status" value="1"/>
</dbReference>
<dbReference type="Gene3D" id="3.40.950.10">
    <property type="entry name" value="Fe-only Hydrogenase (Larger Subunit), Chain L, domain 3"/>
    <property type="match status" value="1"/>
</dbReference>
<dbReference type="InterPro" id="IPR050340">
    <property type="entry name" value="Cytosolic_Fe-S_CAF"/>
</dbReference>
<dbReference type="InterPro" id="IPR009016">
    <property type="entry name" value="Fe_hydrogenase"/>
</dbReference>
<dbReference type="InterPro" id="IPR004108">
    <property type="entry name" value="Fe_hydrogenase_lsu_C"/>
</dbReference>
<dbReference type="InterPro" id="IPR003149">
    <property type="entry name" value="Fe_hydrogenase_ssu"/>
</dbReference>
<dbReference type="PANTHER" id="PTHR11615">
    <property type="entry name" value="NITRATE, FORMATE, IRON DEHYDROGENASE"/>
    <property type="match status" value="1"/>
</dbReference>
<dbReference type="Pfam" id="PF02906">
    <property type="entry name" value="Fe_hyd_lg_C"/>
    <property type="match status" value="1"/>
</dbReference>
<dbReference type="Pfam" id="PF02256">
    <property type="entry name" value="Fe_hyd_SSU"/>
    <property type="match status" value="1"/>
</dbReference>
<dbReference type="SMART" id="SM00902">
    <property type="entry name" value="Fe_hyd_SSU"/>
    <property type="match status" value="1"/>
</dbReference>
<dbReference type="SUPFAM" id="SSF53920">
    <property type="entry name" value="Fe-only hydrogenase"/>
    <property type="match status" value="1"/>
</dbReference>
<evidence type="ECO:0000250" key="1"/>
<evidence type="ECO:0000255" key="2"/>
<evidence type="ECO:0000305" key="3"/>
<comment type="function">
    <text evidence="1">Component of the cytosolic iron-sulfur (Fe/S) protein assembly machinery. Required for maturation of extramitochondrial Fe/S proteins (By similarity).</text>
</comment>
<comment type="similarity">
    <text evidence="3">Belongs to the NARF family.</text>
</comment>
<accession>B4LQR5</accession>
<keyword id="KW-0004">4Fe-4S</keyword>
<keyword id="KW-0408">Iron</keyword>
<keyword id="KW-0411">Iron-sulfur</keyword>
<keyword id="KW-0479">Metal-binding</keyword>
<keyword id="KW-1185">Reference proteome</keyword>